<sequence>MTDDIVFENMVIDDTIVEEEDVEMKYYLKNKKEFEFLAKEMLSGKKILFITGAGLSINSGISAYRNTKTSVWSNFITEWGTRKKFEQDPAQFWNHFWLRTHEKQEYLDALPNSGHLAISNFVEYLGSNVITQNVDALHLKAKVPIEKLVEVHGRISLYKCITKGCRFEYDDTIDNIEIGDYSINGTTMKQGNLEITPPLCPECKKPILPQSLLFDENYSSHQFYNIEKAMDWIQEADIFIFIGTSFSVGITEEVICHAQSERKKMFNFNIFKETKISGLKSIVGKSEITLPLLERQLLYEAQKRNNGKKQIWYGNTIKRIVSENSMLLKEAMLKNDTKSSVKV</sequence>
<feature type="chain" id="PRO_0000393270" description="NAD-dependent deacetylase sir2E">
    <location>
        <begin position="1"/>
        <end position="343"/>
    </location>
</feature>
<feature type="domain" description="Deacetylase sirtuin-type" evidence="2">
    <location>
        <begin position="27"/>
        <end position="300"/>
    </location>
</feature>
<feature type="active site" description="Proton acceptor" evidence="2">
    <location>
        <position position="152"/>
    </location>
</feature>
<feature type="binding site" evidence="2">
    <location>
        <position position="160"/>
    </location>
    <ligand>
        <name>Zn(2+)</name>
        <dbReference type="ChEBI" id="CHEBI:29105"/>
    </ligand>
</feature>
<feature type="binding site" evidence="2">
    <location>
        <position position="165"/>
    </location>
    <ligand>
        <name>Zn(2+)</name>
        <dbReference type="ChEBI" id="CHEBI:29105"/>
    </ligand>
</feature>
<feature type="binding site" evidence="2">
    <location>
        <position position="200"/>
    </location>
    <ligand>
        <name>Zn(2+)</name>
        <dbReference type="ChEBI" id="CHEBI:29105"/>
    </ligand>
</feature>
<feature type="binding site" evidence="2">
    <location>
        <position position="203"/>
    </location>
    <ligand>
        <name>Zn(2+)</name>
        <dbReference type="ChEBI" id="CHEBI:29105"/>
    </ligand>
</feature>
<organism>
    <name type="scientific">Dictyostelium discoideum</name>
    <name type="common">Social amoeba</name>
    <dbReference type="NCBI Taxonomy" id="44689"/>
    <lineage>
        <taxon>Eukaryota</taxon>
        <taxon>Amoebozoa</taxon>
        <taxon>Evosea</taxon>
        <taxon>Eumycetozoa</taxon>
        <taxon>Dictyostelia</taxon>
        <taxon>Dictyosteliales</taxon>
        <taxon>Dictyosteliaceae</taxon>
        <taxon>Dictyostelium</taxon>
    </lineage>
</organism>
<evidence type="ECO:0000250" key="1"/>
<evidence type="ECO:0000255" key="2">
    <source>
        <dbReference type="PROSITE-ProRule" id="PRU00236"/>
    </source>
</evidence>
<evidence type="ECO:0000269" key="3">
    <source>
    </source>
</evidence>
<evidence type="ECO:0000305" key="4"/>
<proteinExistence type="evidence at transcript level"/>
<gene>
    <name type="primary">sir2E</name>
    <name type="ORF">DDB_G0270928</name>
</gene>
<dbReference type="EC" id="2.3.1.286" evidence="2"/>
<dbReference type="EMBL" id="AAFI02000005">
    <property type="protein sequence ID" value="EAL72814.2"/>
    <property type="molecule type" value="Genomic_DNA"/>
</dbReference>
<dbReference type="RefSeq" id="XP_646221.2">
    <property type="nucleotide sequence ID" value="XM_641129.2"/>
</dbReference>
<dbReference type="SMR" id="Q55DB0"/>
<dbReference type="FunCoup" id="Q55DB0">
    <property type="interactions" value="240"/>
</dbReference>
<dbReference type="STRING" id="44689.Q55DB0"/>
<dbReference type="PaxDb" id="44689-DDB0219995"/>
<dbReference type="EnsemblProtists" id="EAL72814">
    <property type="protein sequence ID" value="EAL72814"/>
    <property type="gene ID" value="DDB_G0270928"/>
</dbReference>
<dbReference type="GeneID" id="8617175"/>
<dbReference type="KEGG" id="ddi:DDB_G0270928"/>
<dbReference type="dictyBase" id="DDB_G0270928">
    <property type="gene designation" value="sir2E"/>
</dbReference>
<dbReference type="VEuPathDB" id="AmoebaDB:DDB_G0270928"/>
<dbReference type="eggNOG" id="KOG2683">
    <property type="taxonomic scope" value="Eukaryota"/>
</dbReference>
<dbReference type="HOGENOM" id="CLU_809934_0_0_1"/>
<dbReference type="InParanoid" id="Q55DB0"/>
<dbReference type="OMA" id="HALMFDE"/>
<dbReference type="PhylomeDB" id="Q55DB0"/>
<dbReference type="Reactome" id="R-DDI-2151201">
    <property type="pathway name" value="Transcriptional activation of mitochondrial biogenesis"/>
</dbReference>
<dbReference type="PRO" id="PR:Q55DB0"/>
<dbReference type="Proteomes" id="UP000002195">
    <property type="component" value="Chromosome 1"/>
</dbReference>
<dbReference type="GO" id="GO:0005829">
    <property type="term" value="C:cytosol"/>
    <property type="evidence" value="ECO:0000318"/>
    <property type="project" value="GO_Central"/>
</dbReference>
<dbReference type="GO" id="GO:0005739">
    <property type="term" value="C:mitochondrion"/>
    <property type="evidence" value="ECO:0000318"/>
    <property type="project" value="GO_Central"/>
</dbReference>
<dbReference type="GO" id="GO:0005634">
    <property type="term" value="C:nucleus"/>
    <property type="evidence" value="ECO:0000314"/>
    <property type="project" value="dictyBase"/>
</dbReference>
<dbReference type="GO" id="GO:0017136">
    <property type="term" value="F:histone deacetylase activity, NAD-dependent"/>
    <property type="evidence" value="ECO:0000318"/>
    <property type="project" value="GO_Central"/>
</dbReference>
<dbReference type="GO" id="GO:0046872">
    <property type="term" value="F:metal ion binding"/>
    <property type="evidence" value="ECO:0007669"/>
    <property type="project" value="UniProtKB-KW"/>
</dbReference>
<dbReference type="GO" id="GO:0070403">
    <property type="term" value="F:NAD+ binding"/>
    <property type="evidence" value="ECO:0000318"/>
    <property type="project" value="GO_Central"/>
</dbReference>
<dbReference type="CDD" id="cd00296">
    <property type="entry name" value="SIR2"/>
    <property type="match status" value="1"/>
</dbReference>
<dbReference type="Gene3D" id="3.30.1600.10">
    <property type="entry name" value="SIR2/SIRT2 'Small Domain"/>
    <property type="match status" value="1"/>
</dbReference>
<dbReference type="Gene3D" id="3.40.50.1220">
    <property type="entry name" value="TPP-binding domain"/>
    <property type="match status" value="1"/>
</dbReference>
<dbReference type="InterPro" id="IPR029035">
    <property type="entry name" value="DHS-like_NAD/FAD-binding_dom"/>
</dbReference>
<dbReference type="InterPro" id="IPR050134">
    <property type="entry name" value="NAD-dep_sirtuin_deacylases"/>
</dbReference>
<dbReference type="InterPro" id="IPR003000">
    <property type="entry name" value="Sirtuin"/>
</dbReference>
<dbReference type="InterPro" id="IPR026591">
    <property type="entry name" value="Sirtuin_cat_small_dom_sf"/>
</dbReference>
<dbReference type="InterPro" id="IPR026590">
    <property type="entry name" value="Ssirtuin_cat_dom"/>
</dbReference>
<dbReference type="PANTHER" id="PTHR11085">
    <property type="entry name" value="NAD-DEPENDENT PROTEIN DEACYLASE SIRTUIN-5, MITOCHONDRIAL-RELATED"/>
    <property type="match status" value="1"/>
</dbReference>
<dbReference type="PANTHER" id="PTHR11085:SF10">
    <property type="entry name" value="NAD-DEPENDENT PROTEIN DEACYLASE SIRTUIN-5, MITOCHONDRIAL-RELATED"/>
    <property type="match status" value="1"/>
</dbReference>
<dbReference type="Pfam" id="PF02146">
    <property type="entry name" value="SIR2"/>
    <property type="match status" value="1"/>
</dbReference>
<dbReference type="SUPFAM" id="SSF52467">
    <property type="entry name" value="DHS-like NAD/FAD-binding domain"/>
    <property type="match status" value="1"/>
</dbReference>
<dbReference type="PROSITE" id="PS50305">
    <property type="entry name" value="SIRTUIN"/>
    <property type="match status" value="1"/>
</dbReference>
<reference key="1">
    <citation type="journal article" date="2005" name="Nature">
        <title>The genome of the social amoeba Dictyostelium discoideum.</title>
        <authorList>
            <person name="Eichinger L."/>
            <person name="Pachebat J.A."/>
            <person name="Gloeckner G."/>
            <person name="Rajandream M.A."/>
            <person name="Sucgang R."/>
            <person name="Berriman M."/>
            <person name="Song J."/>
            <person name="Olsen R."/>
            <person name="Szafranski K."/>
            <person name="Xu Q."/>
            <person name="Tunggal B."/>
            <person name="Kummerfeld S."/>
            <person name="Madera M."/>
            <person name="Konfortov B.A."/>
            <person name="Rivero F."/>
            <person name="Bankier A.T."/>
            <person name="Lehmann R."/>
            <person name="Hamlin N."/>
            <person name="Davies R."/>
            <person name="Gaudet P."/>
            <person name="Fey P."/>
            <person name="Pilcher K."/>
            <person name="Chen G."/>
            <person name="Saunders D."/>
            <person name="Sodergren E.J."/>
            <person name="Davis P."/>
            <person name="Kerhornou A."/>
            <person name="Nie X."/>
            <person name="Hall N."/>
            <person name="Anjard C."/>
            <person name="Hemphill L."/>
            <person name="Bason N."/>
            <person name="Farbrother P."/>
            <person name="Desany B."/>
            <person name="Just E."/>
            <person name="Morio T."/>
            <person name="Rost R."/>
            <person name="Churcher C.M."/>
            <person name="Cooper J."/>
            <person name="Haydock S."/>
            <person name="van Driessche N."/>
            <person name="Cronin A."/>
            <person name="Goodhead I."/>
            <person name="Muzny D.M."/>
            <person name="Mourier T."/>
            <person name="Pain A."/>
            <person name="Lu M."/>
            <person name="Harper D."/>
            <person name="Lindsay R."/>
            <person name="Hauser H."/>
            <person name="James K.D."/>
            <person name="Quiles M."/>
            <person name="Madan Babu M."/>
            <person name="Saito T."/>
            <person name="Buchrieser C."/>
            <person name="Wardroper A."/>
            <person name="Felder M."/>
            <person name="Thangavelu M."/>
            <person name="Johnson D."/>
            <person name="Knights A."/>
            <person name="Loulseged H."/>
            <person name="Mungall K.L."/>
            <person name="Oliver K."/>
            <person name="Price C."/>
            <person name="Quail M.A."/>
            <person name="Urushihara H."/>
            <person name="Hernandez J."/>
            <person name="Rabbinowitsch E."/>
            <person name="Steffen D."/>
            <person name="Sanders M."/>
            <person name="Ma J."/>
            <person name="Kohara Y."/>
            <person name="Sharp S."/>
            <person name="Simmonds M.N."/>
            <person name="Spiegler S."/>
            <person name="Tivey A."/>
            <person name="Sugano S."/>
            <person name="White B."/>
            <person name="Walker D."/>
            <person name="Woodward J.R."/>
            <person name="Winckler T."/>
            <person name="Tanaka Y."/>
            <person name="Shaulsky G."/>
            <person name="Schleicher M."/>
            <person name="Weinstock G.M."/>
            <person name="Rosenthal A."/>
            <person name="Cox E.C."/>
            <person name="Chisholm R.L."/>
            <person name="Gibbs R.A."/>
            <person name="Loomis W.F."/>
            <person name="Platzer M."/>
            <person name="Kay R.R."/>
            <person name="Williams J.G."/>
            <person name="Dear P.H."/>
            <person name="Noegel A.A."/>
            <person name="Barrell B.G."/>
            <person name="Kuspa A."/>
        </authorList>
    </citation>
    <scope>NUCLEOTIDE SEQUENCE [LARGE SCALE GENOMIC DNA]</scope>
    <source>
        <strain>AX4</strain>
    </source>
</reference>
<reference key="2">
    <citation type="journal article" date="2008" name="Dev. Growth Differ.">
        <title>Analysis of Sir2E in the cellular slime mold Dictyostelium discoideum: cellular localization, spatial expression and overexpression.</title>
        <authorList>
            <person name="Katayama T."/>
            <person name="Yasukawa H."/>
        </authorList>
    </citation>
    <scope>FUNCTION</scope>
    <scope>SUBCELLULAR LOCATION</scope>
    <scope>DEVELOPMENTAL STAGE</scope>
    <scope>DISRUPTION PHENOTYPE</scope>
</reference>
<accession>Q55DB0</accession>
<comment type="function">
    <text evidence="1 3">NAD-dependent deacetylase, which plays an important role in the regulation of transcriptional repression (By similarity). May play a role in cell cycle. When overexpressed, the cell cycle is accelerated.</text>
</comment>
<comment type="catalytic activity">
    <reaction evidence="2">
        <text>N(6)-acetyl-L-lysyl-[protein] + NAD(+) + H2O = 2''-O-acetyl-ADP-D-ribose + nicotinamide + L-lysyl-[protein]</text>
        <dbReference type="Rhea" id="RHEA:43636"/>
        <dbReference type="Rhea" id="RHEA-COMP:9752"/>
        <dbReference type="Rhea" id="RHEA-COMP:10731"/>
        <dbReference type="ChEBI" id="CHEBI:15377"/>
        <dbReference type="ChEBI" id="CHEBI:17154"/>
        <dbReference type="ChEBI" id="CHEBI:29969"/>
        <dbReference type="ChEBI" id="CHEBI:57540"/>
        <dbReference type="ChEBI" id="CHEBI:61930"/>
        <dbReference type="ChEBI" id="CHEBI:83767"/>
        <dbReference type="EC" id="2.3.1.286"/>
    </reaction>
</comment>
<comment type="subcellular location">
    <subcellularLocation>
        <location evidence="3">Nucleus</location>
    </subcellularLocation>
</comment>
<comment type="developmental stage">
    <text evidence="3">Expressed almost at the same level throughout the life cycle. Expressed in PstA, PstB and PstO prestalk cells in the developmental phase and not in the prespore cells.</text>
</comment>
<comment type="disruption phenotype">
    <text evidence="3">Null cells could not be established, suggesting that sir2E might be essential.</text>
</comment>
<comment type="similarity">
    <text evidence="4">Belongs to the sirtuin family.</text>
</comment>
<protein>
    <recommendedName>
        <fullName>NAD-dependent deacetylase sir2E</fullName>
        <ecNumber evidence="2">2.3.1.286</ecNumber>
    </recommendedName>
    <alternativeName>
        <fullName>Silent information regulator 2E</fullName>
    </alternativeName>
</protein>
<name>SIR2E_DICDI</name>
<keyword id="KW-0479">Metal-binding</keyword>
<keyword id="KW-0520">NAD</keyword>
<keyword id="KW-0539">Nucleus</keyword>
<keyword id="KW-1185">Reference proteome</keyword>
<keyword id="KW-0808">Transferase</keyword>
<keyword id="KW-0862">Zinc</keyword>